<name>NUDJ_ECOSM</name>
<comment type="cofactor">
    <cofactor evidence="1">
        <name>Mg(2+)</name>
        <dbReference type="ChEBI" id="CHEBI:18420"/>
    </cofactor>
</comment>
<comment type="subunit">
    <text evidence="1">Monomer.</text>
</comment>
<comment type="similarity">
    <text evidence="3">Belongs to the Nudix hydrolase family. NudJ subfamily.</text>
</comment>
<accession>B1LI09</accession>
<sequence>MFKPHVTVACVVHAEGKFLVVEETINGKALWNQPAGHLEADETLVEAAARELWEETGISAQPQHFIRMHQWIAPDKTPFLRFLFAIELEQICPTQPHDSDIDCCRWVSAEEILQASNLRSPLVAESIRCYQSGQRYPLEMIGDFNWPFTKGVI</sequence>
<keyword id="KW-0378">Hydrolase</keyword>
<keyword id="KW-0460">Magnesium</keyword>
<gene>
    <name type="primary">nudJ</name>
    <name type="ordered locus">EcSMS35_1991</name>
</gene>
<reference key="1">
    <citation type="journal article" date="2008" name="J. Bacteriol.">
        <title>Insights into the environmental resistance gene pool from the genome sequence of the multidrug-resistant environmental isolate Escherichia coli SMS-3-5.</title>
        <authorList>
            <person name="Fricke W.F."/>
            <person name="Wright M.S."/>
            <person name="Lindell A.H."/>
            <person name="Harkins D.M."/>
            <person name="Baker-Austin C."/>
            <person name="Ravel J."/>
            <person name="Stepanauskas R."/>
        </authorList>
    </citation>
    <scope>NUCLEOTIDE SEQUENCE [LARGE SCALE GENOMIC DNA]</scope>
    <source>
        <strain>SMS-3-5 / SECEC</strain>
    </source>
</reference>
<feature type="chain" id="PRO_0000342639" description="Phosphatase NudJ">
    <location>
        <begin position="1"/>
        <end position="153"/>
    </location>
</feature>
<feature type="domain" description="Nudix hydrolase" evidence="2">
    <location>
        <begin position="3"/>
        <end position="131"/>
    </location>
</feature>
<feature type="short sequence motif" description="Nudix box">
    <location>
        <begin position="36"/>
        <end position="57"/>
    </location>
</feature>
<protein>
    <recommendedName>
        <fullName>Phosphatase NudJ</fullName>
        <ecNumber>3.6.1.-</ecNumber>
    </recommendedName>
</protein>
<proteinExistence type="inferred from homology"/>
<organism>
    <name type="scientific">Escherichia coli (strain SMS-3-5 / SECEC)</name>
    <dbReference type="NCBI Taxonomy" id="439855"/>
    <lineage>
        <taxon>Bacteria</taxon>
        <taxon>Pseudomonadati</taxon>
        <taxon>Pseudomonadota</taxon>
        <taxon>Gammaproteobacteria</taxon>
        <taxon>Enterobacterales</taxon>
        <taxon>Enterobacteriaceae</taxon>
        <taxon>Escherichia</taxon>
    </lineage>
</organism>
<dbReference type="EC" id="3.6.1.-"/>
<dbReference type="EMBL" id="CP000970">
    <property type="protein sequence ID" value="ACB17225.1"/>
    <property type="molecule type" value="Genomic_DNA"/>
</dbReference>
<dbReference type="RefSeq" id="WP_000476093.1">
    <property type="nucleotide sequence ID" value="NC_010498.1"/>
</dbReference>
<dbReference type="SMR" id="B1LI09"/>
<dbReference type="GeneID" id="75203720"/>
<dbReference type="KEGG" id="ecm:EcSMS35_1991"/>
<dbReference type="HOGENOM" id="CLU_037162_6_1_6"/>
<dbReference type="Proteomes" id="UP000007011">
    <property type="component" value="Chromosome"/>
</dbReference>
<dbReference type="GO" id="GO:0017110">
    <property type="term" value="F:nucleoside diphosphate phosphatase activity"/>
    <property type="evidence" value="ECO:0007669"/>
    <property type="project" value="InterPro"/>
</dbReference>
<dbReference type="GO" id="GO:0017111">
    <property type="term" value="F:ribonucleoside triphosphate phosphatase activity"/>
    <property type="evidence" value="ECO:0007669"/>
    <property type="project" value="InterPro"/>
</dbReference>
<dbReference type="GO" id="GO:0004787">
    <property type="term" value="F:thiamine diphosphate phosphatase activity"/>
    <property type="evidence" value="ECO:0007669"/>
    <property type="project" value="InterPro"/>
</dbReference>
<dbReference type="CDD" id="cd03675">
    <property type="entry name" value="NUDIX_Hydrolase"/>
    <property type="match status" value="1"/>
</dbReference>
<dbReference type="FunFam" id="3.90.79.10:FF:000017">
    <property type="entry name" value="Phosphatase NudJ"/>
    <property type="match status" value="1"/>
</dbReference>
<dbReference type="Gene3D" id="3.90.79.10">
    <property type="entry name" value="Nucleoside Triphosphate Pyrophosphohydrolase"/>
    <property type="match status" value="1"/>
</dbReference>
<dbReference type="InterPro" id="IPR020476">
    <property type="entry name" value="Nudix_hydrolase"/>
</dbReference>
<dbReference type="InterPro" id="IPR015797">
    <property type="entry name" value="NUDIX_hydrolase-like_dom_sf"/>
</dbReference>
<dbReference type="InterPro" id="IPR020084">
    <property type="entry name" value="NUDIX_hydrolase_CS"/>
</dbReference>
<dbReference type="InterPro" id="IPR000086">
    <property type="entry name" value="NUDIX_hydrolase_dom"/>
</dbReference>
<dbReference type="InterPro" id="IPR033713">
    <property type="entry name" value="NudJ"/>
</dbReference>
<dbReference type="PANTHER" id="PTHR43222">
    <property type="entry name" value="NUDIX HYDROLASE 23"/>
    <property type="match status" value="1"/>
</dbReference>
<dbReference type="PANTHER" id="PTHR43222:SF11">
    <property type="entry name" value="PHOSPHATASE NUDJ"/>
    <property type="match status" value="1"/>
</dbReference>
<dbReference type="Pfam" id="PF00293">
    <property type="entry name" value="NUDIX"/>
    <property type="match status" value="1"/>
</dbReference>
<dbReference type="PRINTS" id="PR00502">
    <property type="entry name" value="NUDIXFAMILY"/>
</dbReference>
<dbReference type="SUPFAM" id="SSF55811">
    <property type="entry name" value="Nudix"/>
    <property type="match status" value="1"/>
</dbReference>
<dbReference type="PROSITE" id="PS51462">
    <property type="entry name" value="NUDIX"/>
    <property type="match status" value="1"/>
</dbReference>
<dbReference type="PROSITE" id="PS00893">
    <property type="entry name" value="NUDIX_BOX"/>
    <property type="match status" value="1"/>
</dbReference>
<evidence type="ECO:0000250" key="1"/>
<evidence type="ECO:0000255" key="2">
    <source>
        <dbReference type="PROSITE-ProRule" id="PRU00794"/>
    </source>
</evidence>
<evidence type="ECO:0000305" key="3"/>